<accession>B1YRJ2</accession>
<evidence type="ECO:0000255" key="1">
    <source>
        <dbReference type="HAMAP-Rule" id="MF_00270"/>
    </source>
</evidence>
<evidence type="ECO:0000305" key="2"/>
<feature type="chain" id="PRO_1000114403" description="Small ribosomal subunit protein bS18">
    <location>
        <begin position="1"/>
        <end position="91"/>
    </location>
</feature>
<sequence length="91" mass="10625">MPRPTGKKFDKRRQQQNPLFKRKKFCRFTAAGVDQIDYKDTETLKDFIGENGKITPARLTGTKAHYQRQLDTAIKRARFLALLPYTDQHKA</sequence>
<gene>
    <name evidence="1" type="primary">rpsR</name>
    <name type="ordered locus">BamMC406_1781</name>
</gene>
<organism>
    <name type="scientific">Burkholderia ambifaria (strain MC40-6)</name>
    <dbReference type="NCBI Taxonomy" id="398577"/>
    <lineage>
        <taxon>Bacteria</taxon>
        <taxon>Pseudomonadati</taxon>
        <taxon>Pseudomonadota</taxon>
        <taxon>Betaproteobacteria</taxon>
        <taxon>Burkholderiales</taxon>
        <taxon>Burkholderiaceae</taxon>
        <taxon>Burkholderia</taxon>
        <taxon>Burkholderia cepacia complex</taxon>
    </lineage>
</organism>
<comment type="function">
    <text evidence="1">Binds as a heterodimer with protein bS6 to the central domain of the 16S rRNA, where it helps stabilize the platform of the 30S subunit.</text>
</comment>
<comment type="subunit">
    <text evidence="1">Part of the 30S ribosomal subunit. Forms a tight heterodimer with protein bS6.</text>
</comment>
<comment type="similarity">
    <text evidence="1">Belongs to the bacterial ribosomal protein bS18 family.</text>
</comment>
<keyword id="KW-0687">Ribonucleoprotein</keyword>
<keyword id="KW-0689">Ribosomal protein</keyword>
<keyword id="KW-0694">RNA-binding</keyword>
<keyword id="KW-0699">rRNA-binding</keyword>
<reference key="1">
    <citation type="submission" date="2008-04" db="EMBL/GenBank/DDBJ databases">
        <title>Complete sequence of chromosome 1 of Burkholderia ambifaria MC40-6.</title>
        <authorList>
            <person name="Copeland A."/>
            <person name="Lucas S."/>
            <person name="Lapidus A."/>
            <person name="Glavina del Rio T."/>
            <person name="Dalin E."/>
            <person name="Tice H."/>
            <person name="Pitluck S."/>
            <person name="Chain P."/>
            <person name="Malfatti S."/>
            <person name="Shin M."/>
            <person name="Vergez L."/>
            <person name="Lang D."/>
            <person name="Schmutz J."/>
            <person name="Larimer F."/>
            <person name="Land M."/>
            <person name="Hauser L."/>
            <person name="Kyrpides N."/>
            <person name="Lykidis A."/>
            <person name="Ramette A."/>
            <person name="Konstantinidis K."/>
            <person name="Tiedje J."/>
            <person name="Richardson P."/>
        </authorList>
    </citation>
    <scope>NUCLEOTIDE SEQUENCE [LARGE SCALE GENOMIC DNA]</scope>
    <source>
        <strain>MC40-6</strain>
    </source>
</reference>
<name>RS18_BURA4</name>
<proteinExistence type="inferred from homology"/>
<protein>
    <recommendedName>
        <fullName evidence="1">Small ribosomal subunit protein bS18</fullName>
    </recommendedName>
    <alternativeName>
        <fullName evidence="2">30S ribosomal protein S18</fullName>
    </alternativeName>
</protein>
<dbReference type="EMBL" id="CP001025">
    <property type="protein sequence ID" value="ACB64266.1"/>
    <property type="molecule type" value="Genomic_DNA"/>
</dbReference>
<dbReference type="RefSeq" id="WP_011657068.1">
    <property type="nucleotide sequence ID" value="NC_010551.1"/>
</dbReference>
<dbReference type="SMR" id="B1YRJ2"/>
<dbReference type="GeneID" id="93085985"/>
<dbReference type="KEGG" id="bac:BamMC406_1781"/>
<dbReference type="HOGENOM" id="CLU_148710_0_3_4"/>
<dbReference type="OrthoDB" id="9812008at2"/>
<dbReference type="Proteomes" id="UP000001680">
    <property type="component" value="Chromosome 1"/>
</dbReference>
<dbReference type="GO" id="GO:0022627">
    <property type="term" value="C:cytosolic small ribosomal subunit"/>
    <property type="evidence" value="ECO:0007669"/>
    <property type="project" value="TreeGrafter"/>
</dbReference>
<dbReference type="GO" id="GO:0070181">
    <property type="term" value="F:small ribosomal subunit rRNA binding"/>
    <property type="evidence" value="ECO:0007669"/>
    <property type="project" value="TreeGrafter"/>
</dbReference>
<dbReference type="GO" id="GO:0003735">
    <property type="term" value="F:structural constituent of ribosome"/>
    <property type="evidence" value="ECO:0007669"/>
    <property type="project" value="InterPro"/>
</dbReference>
<dbReference type="GO" id="GO:0006412">
    <property type="term" value="P:translation"/>
    <property type="evidence" value="ECO:0007669"/>
    <property type="project" value="UniProtKB-UniRule"/>
</dbReference>
<dbReference type="Gene3D" id="4.10.640.10">
    <property type="entry name" value="Ribosomal protein S18"/>
    <property type="match status" value="1"/>
</dbReference>
<dbReference type="HAMAP" id="MF_00270">
    <property type="entry name" value="Ribosomal_bS18"/>
    <property type="match status" value="1"/>
</dbReference>
<dbReference type="InterPro" id="IPR001648">
    <property type="entry name" value="Ribosomal_bS18"/>
</dbReference>
<dbReference type="InterPro" id="IPR018275">
    <property type="entry name" value="Ribosomal_bS18_CS"/>
</dbReference>
<dbReference type="InterPro" id="IPR036870">
    <property type="entry name" value="Ribosomal_bS18_sf"/>
</dbReference>
<dbReference type="NCBIfam" id="TIGR00165">
    <property type="entry name" value="S18"/>
    <property type="match status" value="1"/>
</dbReference>
<dbReference type="PANTHER" id="PTHR13479">
    <property type="entry name" value="30S RIBOSOMAL PROTEIN S18"/>
    <property type="match status" value="1"/>
</dbReference>
<dbReference type="PANTHER" id="PTHR13479:SF40">
    <property type="entry name" value="SMALL RIBOSOMAL SUBUNIT PROTEIN BS18M"/>
    <property type="match status" value="1"/>
</dbReference>
<dbReference type="Pfam" id="PF01084">
    <property type="entry name" value="Ribosomal_S18"/>
    <property type="match status" value="1"/>
</dbReference>
<dbReference type="PRINTS" id="PR00974">
    <property type="entry name" value="RIBOSOMALS18"/>
</dbReference>
<dbReference type="SUPFAM" id="SSF46911">
    <property type="entry name" value="Ribosomal protein S18"/>
    <property type="match status" value="1"/>
</dbReference>
<dbReference type="PROSITE" id="PS00057">
    <property type="entry name" value="RIBOSOMAL_S18"/>
    <property type="match status" value="1"/>
</dbReference>